<protein>
    <recommendedName>
        <fullName evidence="1">N-acetyl-gamma-glutamyl-phosphate reductase</fullName>
        <shortName evidence="1">AGPR</shortName>
        <ecNumber evidence="1">1.2.1.38</ecNumber>
    </recommendedName>
    <alternativeName>
        <fullName evidence="1">N-acetyl-glutamate semialdehyde dehydrogenase</fullName>
        <shortName evidence="1">NAGSA dehydrogenase</shortName>
    </alternativeName>
</protein>
<evidence type="ECO:0000255" key="1">
    <source>
        <dbReference type="HAMAP-Rule" id="MF_00150"/>
    </source>
</evidence>
<keyword id="KW-0028">Amino-acid biosynthesis</keyword>
<keyword id="KW-0055">Arginine biosynthesis</keyword>
<keyword id="KW-0963">Cytoplasm</keyword>
<keyword id="KW-0521">NADP</keyword>
<keyword id="KW-0560">Oxidoreductase</keyword>
<keyword id="KW-1185">Reference proteome</keyword>
<sequence length="342" mass="34841">MTVRVAVAGASGYAGGELLRLLLSHPEVEIGALTAGGNAGSELGAHHPNLLPLADRVLADTTTAQLSGHDVVFLALPHGHSAAIAAELGDDTVVIDCGADHRLNDPTDWARWYGGEHPGTWPYGIPELPGLRERLTGARRVAVPGCFPTVSSLTIAPALAAGLVDPEVVVVAVTGTSGAGRALKPHLLSAEVMGSASVYGVGGAHRHTPELIQNLSAAGGEPVRVSFTPVLAPMARGILATCSAALRADTDAEAVRKVYLDAYGDEPFVHVLPEGTWPQTSATLGANTVHLQVTVDDDAGRLVAVGAVDNLTKGTAGAAVQCMNLALGLPETTGLPLVGVAP</sequence>
<comment type="function">
    <text evidence="1">Catalyzes the NADPH-dependent reduction of N-acetyl-5-glutamyl phosphate to yield N-acetyl-L-glutamate 5-semialdehyde.</text>
</comment>
<comment type="catalytic activity">
    <reaction evidence="1">
        <text>N-acetyl-L-glutamate 5-semialdehyde + phosphate + NADP(+) = N-acetyl-L-glutamyl 5-phosphate + NADPH + H(+)</text>
        <dbReference type="Rhea" id="RHEA:21588"/>
        <dbReference type="ChEBI" id="CHEBI:15378"/>
        <dbReference type="ChEBI" id="CHEBI:29123"/>
        <dbReference type="ChEBI" id="CHEBI:43474"/>
        <dbReference type="ChEBI" id="CHEBI:57783"/>
        <dbReference type="ChEBI" id="CHEBI:57936"/>
        <dbReference type="ChEBI" id="CHEBI:58349"/>
        <dbReference type="EC" id="1.2.1.38"/>
    </reaction>
</comment>
<comment type="pathway">
    <text evidence="1">Amino-acid biosynthesis; L-arginine biosynthesis; N(2)-acetyl-L-ornithine from L-glutamate: step 3/4.</text>
</comment>
<comment type="subcellular location">
    <subcellularLocation>
        <location evidence="1">Cytoplasm</location>
    </subcellularLocation>
</comment>
<comment type="similarity">
    <text evidence="1">Belongs to the NAGSA dehydrogenase family. Type 1 subfamily.</text>
</comment>
<gene>
    <name evidence="1" type="primary">argC</name>
    <name type="ordered locus">SACE_5263</name>
</gene>
<organism>
    <name type="scientific">Saccharopolyspora erythraea (strain ATCC 11635 / DSM 40517 / JCM 4748 / NBRC 13426 / NCIMB 8594 / NRRL 2338)</name>
    <dbReference type="NCBI Taxonomy" id="405948"/>
    <lineage>
        <taxon>Bacteria</taxon>
        <taxon>Bacillati</taxon>
        <taxon>Actinomycetota</taxon>
        <taxon>Actinomycetes</taxon>
        <taxon>Pseudonocardiales</taxon>
        <taxon>Pseudonocardiaceae</taxon>
        <taxon>Saccharopolyspora</taxon>
    </lineage>
</organism>
<name>ARGC_SACEN</name>
<dbReference type="EC" id="1.2.1.38" evidence="1"/>
<dbReference type="EMBL" id="AM420293">
    <property type="protein sequence ID" value="CAM04503.1"/>
    <property type="molecule type" value="Genomic_DNA"/>
</dbReference>
<dbReference type="RefSeq" id="WP_009951368.1">
    <property type="nucleotide sequence ID" value="NC_009142.1"/>
</dbReference>
<dbReference type="SMR" id="A4FKC8"/>
<dbReference type="STRING" id="405948.SACE_5263"/>
<dbReference type="KEGG" id="sen:SACE_5263"/>
<dbReference type="eggNOG" id="COG0002">
    <property type="taxonomic scope" value="Bacteria"/>
</dbReference>
<dbReference type="HOGENOM" id="CLU_006384_0_0_11"/>
<dbReference type="OrthoDB" id="9801289at2"/>
<dbReference type="UniPathway" id="UPA00068">
    <property type="reaction ID" value="UER00108"/>
</dbReference>
<dbReference type="Proteomes" id="UP000006728">
    <property type="component" value="Chromosome"/>
</dbReference>
<dbReference type="GO" id="GO:0005737">
    <property type="term" value="C:cytoplasm"/>
    <property type="evidence" value="ECO:0007669"/>
    <property type="project" value="UniProtKB-SubCell"/>
</dbReference>
<dbReference type="GO" id="GO:0003942">
    <property type="term" value="F:N-acetyl-gamma-glutamyl-phosphate reductase activity"/>
    <property type="evidence" value="ECO:0007669"/>
    <property type="project" value="UniProtKB-UniRule"/>
</dbReference>
<dbReference type="GO" id="GO:0051287">
    <property type="term" value="F:NAD binding"/>
    <property type="evidence" value="ECO:0007669"/>
    <property type="project" value="InterPro"/>
</dbReference>
<dbReference type="GO" id="GO:0070401">
    <property type="term" value="F:NADP+ binding"/>
    <property type="evidence" value="ECO:0007669"/>
    <property type="project" value="InterPro"/>
</dbReference>
<dbReference type="GO" id="GO:0006526">
    <property type="term" value="P:L-arginine biosynthetic process"/>
    <property type="evidence" value="ECO:0007669"/>
    <property type="project" value="UniProtKB-UniRule"/>
</dbReference>
<dbReference type="CDD" id="cd24148">
    <property type="entry name" value="AGPR_1_actinobacAGPR_like"/>
    <property type="match status" value="1"/>
</dbReference>
<dbReference type="CDD" id="cd23934">
    <property type="entry name" value="AGPR_1_C"/>
    <property type="match status" value="1"/>
</dbReference>
<dbReference type="Gene3D" id="3.30.360.10">
    <property type="entry name" value="Dihydrodipicolinate Reductase, domain 2"/>
    <property type="match status" value="1"/>
</dbReference>
<dbReference type="Gene3D" id="3.40.50.720">
    <property type="entry name" value="NAD(P)-binding Rossmann-like Domain"/>
    <property type="match status" value="1"/>
</dbReference>
<dbReference type="HAMAP" id="MF_00150">
    <property type="entry name" value="ArgC_type1"/>
    <property type="match status" value="1"/>
</dbReference>
<dbReference type="InterPro" id="IPR023013">
    <property type="entry name" value="AGPR_AS"/>
</dbReference>
<dbReference type="InterPro" id="IPR000706">
    <property type="entry name" value="AGPR_type-1"/>
</dbReference>
<dbReference type="InterPro" id="IPR036291">
    <property type="entry name" value="NAD(P)-bd_dom_sf"/>
</dbReference>
<dbReference type="InterPro" id="IPR050085">
    <property type="entry name" value="NAGSA_dehydrogenase"/>
</dbReference>
<dbReference type="InterPro" id="IPR000534">
    <property type="entry name" value="Semialdehyde_DH_NAD-bd"/>
</dbReference>
<dbReference type="NCBIfam" id="TIGR01850">
    <property type="entry name" value="argC"/>
    <property type="match status" value="1"/>
</dbReference>
<dbReference type="PANTHER" id="PTHR32338:SF10">
    <property type="entry name" value="N-ACETYL-GAMMA-GLUTAMYL-PHOSPHATE REDUCTASE, CHLOROPLASTIC-RELATED"/>
    <property type="match status" value="1"/>
</dbReference>
<dbReference type="PANTHER" id="PTHR32338">
    <property type="entry name" value="N-ACETYL-GAMMA-GLUTAMYL-PHOSPHATE REDUCTASE, CHLOROPLASTIC-RELATED-RELATED"/>
    <property type="match status" value="1"/>
</dbReference>
<dbReference type="Pfam" id="PF01118">
    <property type="entry name" value="Semialdhyde_dh"/>
    <property type="match status" value="1"/>
</dbReference>
<dbReference type="Pfam" id="PF22698">
    <property type="entry name" value="Semialdhyde_dhC_1"/>
    <property type="match status" value="1"/>
</dbReference>
<dbReference type="SMART" id="SM00859">
    <property type="entry name" value="Semialdhyde_dh"/>
    <property type="match status" value="1"/>
</dbReference>
<dbReference type="SUPFAM" id="SSF55347">
    <property type="entry name" value="Glyceraldehyde-3-phosphate dehydrogenase-like, C-terminal domain"/>
    <property type="match status" value="1"/>
</dbReference>
<dbReference type="SUPFAM" id="SSF51735">
    <property type="entry name" value="NAD(P)-binding Rossmann-fold domains"/>
    <property type="match status" value="1"/>
</dbReference>
<dbReference type="PROSITE" id="PS01224">
    <property type="entry name" value="ARGC"/>
    <property type="match status" value="1"/>
</dbReference>
<reference key="1">
    <citation type="journal article" date="2007" name="Nat. Biotechnol.">
        <title>Complete genome sequence of the erythromycin-producing bacterium Saccharopolyspora erythraea NRRL23338.</title>
        <authorList>
            <person name="Oliynyk M."/>
            <person name="Samborskyy M."/>
            <person name="Lester J.B."/>
            <person name="Mironenko T."/>
            <person name="Scott N."/>
            <person name="Dickens S."/>
            <person name="Haydock S.F."/>
            <person name="Leadlay P.F."/>
        </authorList>
    </citation>
    <scope>NUCLEOTIDE SEQUENCE [LARGE SCALE GENOMIC DNA]</scope>
    <source>
        <strain>ATCC 11635 / DSM 40517 / JCM 4748 / NBRC 13426 / NCIMB 8594 / NRRL 2338</strain>
    </source>
</reference>
<feature type="chain" id="PRO_1000011055" description="N-acetyl-gamma-glutamyl-phosphate reductase">
    <location>
        <begin position="1"/>
        <end position="342"/>
    </location>
</feature>
<feature type="active site" evidence="1">
    <location>
        <position position="146"/>
    </location>
</feature>
<proteinExistence type="inferred from homology"/>
<accession>A4FKC8</accession>